<protein>
    <recommendedName>
        <fullName evidence="1">Nucleotide-binding protein RER_30260</fullName>
    </recommendedName>
</protein>
<evidence type="ECO:0000255" key="1">
    <source>
        <dbReference type="HAMAP-Rule" id="MF_00636"/>
    </source>
</evidence>
<proteinExistence type="inferred from homology"/>
<accession>C0ZZE9</accession>
<name>Y3026_RHOE4</name>
<organism>
    <name type="scientific">Rhodococcus erythropolis (strain PR4 / NBRC 100887)</name>
    <dbReference type="NCBI Taxonomy" id="234621"/>
    <lineage>
        <taxon>Bacteria</taxon>
        <taxon>Bacillati</taxon>
        <taxon>Actinomycetota</taxon>
        <taxon>Actinomycetes</taxon>
        <taxon>Mycobacteriales</taxon>
        <taxon>Nocardiaceae</taxon>
        <taxon>Rhodococcus</taxon>
        <taxon>Rhodococcus erythropolis group</taxon>
    </lineage>
</organism>
<gene>
    <name type="ordered locus">RER_30260</name>
</gene>
<reference key="1">
    <citation type="submission" date="2005-03" db="EMBL/GenBank/DDBJ databases">
        <title>Comparison of the complete genome sequences of Rhodococcus erythropolis PR4 and Rhodococcus opacus B4.</title>
        <authorList>
            <person name="Takarada H."/>
            <person name="Sekine M."/>
            <person name="Hosoyama A."/>
            <person name="Yamada R."/>
            <person name="Fujisawa T."/>
            <person name="Omata S."/>
            <person name="Shimizu A."/>
            <person name="Tsukatani N."/>
            <person name="Tanikawa S."/>
            <person name="Fujita N."/>
            <person name="Harayama S."/>
        </authorList>
    </citation>
    <scope>NUCLEOTIDE SEQUENCE [LARGE SCALE GENOMIC DNA]</scope>
    <source>
        <strain>PR4 / NBRC 100887</strain>
    </source>
</reference>
<comment type="function">
    <text evidence="1">Displays ATPase and GTPase activities.</text>
</comment>
<comment type="similarity">
    <text evidence="1">Belongs to the RapZ-like family.</text>
</comment>
<sequence>MTTDSAKDSRTMDFLLVTGLSGAGLSTAAKVLEDLGWYVADNLPPELISRMVGLSLTSDPPVDRLAVVIDVRSRLFTGDLGWVLTELEAEPIHTRVLYLEASDDVLIRRFEQVRRSHPLQNDGIDGTLSEGIAAERRQLAVVKAAADLVIDTSALKAHQLRQKIETAFGNDANRTMKVTVQSFGFKYGLPMDADLVCDVRFLPNPHWIPELRPHTGQDADVRDYVLSREGAEDYLDTYRHLVDLTIAGYRREGKRYMTIAVGCTGGKHRSVAMSEALARRLGSEDDISVSIVHRDLGRE</sequence>
<dbReference type="EMBL" id="AP008957">
    <property type="protein sequence ID" value="BAH33734.1"/>
    <property type="molecule type" value="Genomic_DNA"/>
</dbReference>
<dbReference type="SMR" id="C0ZZE9"/>
<dbReference type="KEGG" id="rer:RER_30260"/>
<dbReference type="eggNOG" id="COG1660">
    <property type="taxonomic scope" value="Bacteria"/>
</dbReference>
<dbReference type="HOGENOM" id="CLU_059558_0_0_11"/>
<dbReference type="Proteomes" id="UP000002204">
    <property type="component" value="Chromosome"/>
</dbReference>
<dbReference type="GO" id="GO:0005524">
    <property type="term" value="F:ATP binding"/>
    <property type="evidence" value="ECO:0007669"/>
    <property type="project" value="UniProtKB-UniRule"/>
</dbReference>
<dbReference type="GO" id="GO:0005525">
    <property type="term" value="F:GTP binding"/>
    <property type="evidence" value="ECO:0007669"/>
    <property type="project" value="UniProtKB-UniRule"/>
</dbReference>
<dbReference type="Gene3D" id="3.40.50.300">
    <property type="entry name" value="P-loop containing nucleotide triphosphate hydrolases"/>
    <property type="match status" value="1"/>
</dbReference>
<dbReference type="HAMAP" id="MF_00636">
    <property type="entry name" value="RapZ_like"/>
    <property type="match status" value="1"/>
</dbReference>
<dbReference type="InterPro" id="IPR027417">
    <property type="entry name" value="P-loop_NTPase"/>
</dbReference>
<dbReference type="InterPro" id="IPR005337">
    <property type="entry name" value="RapZ-like"/>
</dbReference>
<dbReference type="InterPro" id="IPR053930">
    <property type="entry name" value="RapZ-like_N"/>
</dbReference>
<dbReference type="InterPro" id="IPR053931">
    <property type="entry name" value="RapZ_C"/>
</dbReference>
<dbReference type="NCBIfam" id="NF003828">
    <property type="entry name" value="PRK05416.1"/>
    <property type="match status" value="1"/>
</dbReference>
<dbReference type="PANTHER" id="PTHR30448">
    <property type="entry name" value="RNASE ADAPTER PROTEIN RAPZ"/>
    <property type="match status" value="1"/>
</dbReference>
<dbReference type="PANTHER" id="PTHR30448:SF0">
    <property type="entry name" value="RNASE ADAPTER PROTEIN RAPZ"/>
    <property type="match status" value="1"/>
</dbReference>
<dbReference type="Pfam" id="PF22740">
    <property type="entry name" value="PapZ_C"/>
    <property type="match status" value="1"/>
</dbReference>
<dbReference type="Pfam" id="PF03668">
    <property type="entry name" value="RapZ-like_N"/>
    <property type="match status" value="1"/>
</dbReference>
<dbReference type="PIRSF" id="PIRSF005052">
    <property type="entry name" value="P-loopkin"/>
    <property type="match status" value="1"/>
</dbReference>
<dbReference type="SUPFAM" id="SSF52540">
    <property type="entry name" value="P-loop containing nucleoside triphosphate hydrolases"/>
    <property type="match status" value="1"/>
</dbReference>
<feature type="chain" id="PRO_0000383281" description="Nucleotide-binding protein RER_30260">
    <location>
        <begin position="1"/>
        <end position="299"/>
    </location>
</feature>
<feature type="binding site" evidence="1">
    <location>
        <begin position="19"/>
        <end position="26"/>
    </location>
    <ligand>
        <name>ATP</name>
        <dbReference type="ChEBI" id="CHEBI:30616"/>
    </ligand>
</feature>
<feature type="binding site" evidence="1">
    <location>
        <begin position="70"/>
        <end position="73"/>
    </location>
    <ligand>
        <name>GTP</name>
        <dbReference type="ChEBI" id="CHEBI:37565"/>
    </ligand>
</feature>
<keyword id="KW-0067">ATP-binding</keyword>
<keyword id="KW-0342">GTP-binding</keyword>
<keyword id="KW-0547">Nucleotide-binding</keyword>